<feature type="chain" id="PRO_0000213377" description="Adenosine 3'-phospho 5'-phosphosulfate transporter 1">
    <location>
        <begin position="1"/>
        <end position="425"/>
    </location>
</feature>
<feature type="transmembrane region" description="Helical" evidence="2">
    <location>
        <begin position="27"/>
        <end position="47"/>
    </location>
</feature>
<feature type="transmembrane region" description="Helical" evidence="2">
    <location>
        <begin position="102"/>
        <end position="122"/>
    </location>
</feature>
<feature type="transmembrane region" description="Helical" evidence="2">
    <location>
        <begin position="147"/>
        <end position="167"/>
    </location>
</feature>
<feature type="transmembrane region" description="Helical" evidence="2">
    <location>
        <begin position="232"/>
        <end position="252"/>
    </location>
</feature>
<feature type="transmembrane region" description="Helical" evidence="2">
    <location>
        <begin position="263"/>
        <end position="283"/>
    </location>
</feature>
<feature type="transmembrane region" description="Helical" evidence="2">
    <location>
        <begin position="303"/>
        <end position="323"/>
    </location>
</feature>
<feature type="transmembrane region" description="Helical" evidence="2">
    <location>
        <begin position="342"/>
        <end position="360"/>
    </location>
</feature>
<feature type="transmembrane region" description="Helical" evidence="2">
    <location>
        <begin position="365"/>
        <end position="387"/>
    </location>
</feature>
<feature type="transmembrane region" description="Helical" evidence="2">
    <location>
        <begin position="391"/>
        <end position="411"/>
    </location>
</feature>
<feature type="splice variant" id="VSP_014086" description="In isoform b and isoform c." evidence="3">
    <original>MDRSIMPIDSP</original>
    <variation>MDPLSWGRGWYAIQTISGSVIQYLKE</variation>
    <location>
        <begin position="1"/>
        <end position="11"/>
    </location>
</feature>
<feature type="splice variant" id="VSP_014403" description="In isoform c." evidence="3">
    <original>MLSIVLSTIMYGHELTFLAAIGFMIVFAAIFVDIHKKYSDKSRGPQRSW</original>
    <variation>RWLHLHHLNRFVSNFYQ</variation>
    <location>
        <begin position="377"/>
        <end position="425"/>
    </location>
</feature>
<accession>Q8MXJ9</accession>
<accession>O16377</accession>
<accession>Q59DN2</accession>
<accession>Q59DN3</accession>
<accession>Q59DN4</accession>
<keyword id="KW-0025">Alternative splicing</keyword>
<keyword id="KW-0333">Golgi apparatus</keyword>
<keyword id="KW-0472">Membrane</keyword>
<keyword id="KW-1185">Reference proteome</keyword>
<keyword id="KW-0812">Transmembrane</keyword>
<keyword id="KW-1133">Transmembrane helix</keyword>
<keyword id="KW-0813">Transport</keyword>
<sequence>MDRSIMPIDSPARDKPPDELVWPLRLFLILLGYSTVATPAAILIYYVRRNRHAFETPYLSIRLLLRSFAVGNPEYQLIPTGEKQARKENDSIPQTRAQCINVIILLLFFFSGIQVTLVAMGVLQERIITRGYRRSDQLEVEDKFGETQFLIFCNRIVALVLSLMILAKDWTKQPPHVPPLYVHSYTSFSNTISSWCQYEALKYVSFPTQTICKASKVVVTMLMGRLVRGQRYSWFEYGCGCTIAFGASLFLLSSSSKGAGSTITYTSFSGMILMAGYLLFDAFTLNWQKALFDTKPKVSKYQMMFGVNFFSAILCAVSLIEQGTLWSSIKFGAEHVDFSRDVFLLSLSGAIGQIFIYSTIERFGPIVFAVIMTIRQMLSIVLSTIMYGHELTFLAAIGFMIVFAAIFVDIHKKYSDKSRGPQRSW</sequence>
<organism>
    <name type="scientific">Caenorhabditis elegans</name>
    <dbReference type="NCBI Taxonomy" id="6239"/>
    <lineage>
        <taxon>Eukaryota</taxon>
        <taxon>Metazoa</taxon>
        <taxon>Ecdysozoa</taxon>
        <taxon>Nematoda</taxon>
        <taxon>Chromadorea</taxon>
        <taxon>Rhabditida</taxon>
        <taxon>Rhabditina</taxon>
        <taxon>Rhabditomorpha</taxon>
        <taxon>Rhabditoidea</taxon>
        <taxon>Rhabditidae</taxon>
        <taxon>Peloderinae</taxon>
        <taxon>Caenorhabditis</taxon>
    </lineage>
</organism>
<protein>
    <recommendedName>
        <fullName>Adenosine 3'-phospho 5'-phosphosulfate transporter 1</fullName>
    </recommendedName>
    <alternativeName>
        <fullName>PAPS transporter 1</fullName>
    </alternativeName>
</protein>
<comment type="function">
    <text evidence="1">Mediates the transport of adenosine 3'-phospho 5'-phosphosulfate (PAPS), from cytosol into Golgi. PAPS is a universal sulfuryl donor for sulfation events that take place in the Golgi (By similarity).</text>
</comment>
<comment type="subcellular location">
    <subcellularLocation>
        <location evidence="1">Golgi apparatus membrane</location>
        <topology evidence="1">Multi-pass membrane protein</topology>
    </subcellularLocation>
</comment>
<comment type="alternative products">
    <event type="alternative splicing"/>
    <isoform>
        <id>Q8MXJ9-1</id>
        <name>a</name>
        <sequence type="displayed"/>
    </isoform>
    <isoform>
        <id>Q8MXJ9-2</id>
        <name>b</name>
        <sequence type="described" ref="VSP_014086"/>
    </isoform>
    <isoform>
        <id>Q8MXJ9-3</id>
        <name>c</name>
        <sequence type="described" ref="VSP_014086 VSP_014403"/>
    </isoform>
</comment>
<comment type="similarity">
    <text evidence="3">Belongs to the nucleotide-sugar transporter family. SLC35B subfamily.</text>
</comment>
<evidence type="ECO:0000250" key="1"/>
<evidence type="ECO:0000255" key="2"/>
<evidence type="ECO:0000305" key="3"/>
<name>S35B2_CAEEL</name>
<reference key="1">
    <citation type="journal article" date="1998" name="Science">
        <title>Genome sequence of the nematode C. elegans: a platform for investigating biology.</title>
        <authorList>
            <consortium name="The C. elegans sequencing consortium"/>
        </authorList>
    </citation>
    <scope>NUCLEOTIDE SEQUENCE [LARGE SCALE GENOMIC DNA]</scope>
    <scope>ALTERNATIVE SPLICING</scope>
    <source>
        <strain>Bristol N2</strain>
    </source>
</reference>
<gene>
    <name type="primary">pst-1</name>
    <name type="ORF">M03F8.2</name>
</gene>
<dbReference type="EMBL" id="FO080495">
    <property type="protein sequence ID" value="CCD64140.1"/>
    <property type="molecule type" value="Genomic_DNA"/>
</dbReference>
<dbReference type="EMBL" id="FO080495">
    <property type="protein sequence ID" value="CCD64141.1"/>
    <property type="molecule type" value="Genomic_DNA"/>
</dbReference>
<dbReference type="EMBL" id="FO080495">
    <property type="protein sequence ID" value="CCD64142.1"/>
    <property type="molecule type" value="Genomic_DNA"/>
</dbReference>
<dbReference type="PIR" id="T31809">
    <property type="entry name" value="T31809"/>
</dbReference>
<dbReference type="RefSeq" id="NP_001024060.1">
    <molecule id="Q8MXJ9-3"/>
    <property type="nucleotide sequence ID" value="NM_001028889.4"/>
</dbReference>
<dbReference type="RefSeq" id="NP_741545.2">
    <molecule id="Q8MXJ9-1"/>
    <property type="nucleotide sequence ID" value="NM_171463.5"/>
</dbReference>
<dbReference type="RefSeq" id="NP_741546.3">
    <molecule id="Q8MXJ9-2"/>
    <property type="nucleotide sequence ID" value="NM_171464.3"/>
</dbReference>
<dbReference type="SMR" id="Q8MXJ9"/>
<dbReference type="FunCoup" id="Q8MXJ9">
    <property type="interactions" value="1577"/>
</dbReference>
<dbReference type="STRING" id="6239.M03F8.2b.1"/>
<dbReference type="PaxDb" id="6239-M03F8.2b"/>
<dbReference type="PeptideAtlas" id="Q8MXJ9"/>
<dbReference type="EnsemblMetazoa" id="M03F8.2a.1">
    <molecule id="Q8MXJ9-1"/>
    <property type="protein sequence ID" value="M03F8.2a.1"/>
    <property type="gene ID" value="WBGene00004206"/>
</dbReference>
<dbReference type="EnsemblMetazoa" id="M03F8.2b.1">
    <molecule id="Q8MXJ9-2"/>
    <property type="protein sequence ID" value="M03F8.2b.1"/>
    <property type="gene ID" value="WBGene00004206"/>
</dbReference>
<dbReference type="EnsemblMetazoa" id="M03F8.2c.1">
    <molecule id="Q8MXJ9-3"/>
    <property type="protein sequence ID" value="M03F8.2c.1"/>
    <property type="gene ID" value="WBGene00004206"/>
</dbReference>
<dbReference type="GeneID" id="178980"/>
<dbReference type="KEGG" id="cel:CELE_M03F8.2"/>
<dbReference type="UCSC" id="M03F8.2a">
    <molecule id="Q8MXJ9-1"/>
    <property type="organism name" value="c. elegans"/>
</dbReference>
<dbReference type="AGR" id="WB:WBGene00004206"/>
<dbReference type="CTD" id="178980"/>
<dbReference type="WormBase" id="M03F8.2a">
    <molecule id="Q8MXJ9-1"/>
    <property type="protein sequence ID" value="CE38399"/>
    <property type="gene ID" value="WBGene00004206"/>
    <property type="gene designation" value="pst-1"/>
</dbReference>
<dbReference type="WormBase" id="M03F8.2b">
    <molecule id="Q8MXJ9-2"/>
    <property type="protein sequence ID" value="CE38400"/>
    <property type="gene ID" value="WBGene00004206"/>
    <property type="gene designation" value="pst-1"/>
</dbReference>
<dbReference type="WormBase" id="M03F8.2c">
    <molecule id="Q8MXJ9-3"/>
    <property type="protein sequence ID" value="CE38401"/>
    <property type="gene ID" value="WBGene00004206"/>
    <property type="gene designation" value="pst-1"/>
</dbReference>
<dbReference type="eggNOG" id="KOG1581">
    <property type="taxonomic scope" value="Eukaryota"/>
</dbReference>
<dbReference type="GeneTree" id="ENSGT00940000157927"/>
<dbReference type="InParanoid" id="Q8MXJ9"/>
<dbReference type="OMA" id="KFENTQF"/>
<dbReference type="OrthoDB" id="10035043at2759"/>
<dbReference type="PhylomeDB" id="Q8MXJ9"/>
<dbReference type="Reactome" id="R-CEL-174362">
    <property type="pathway name" value="Transport and synthesis of PAPS"/>
</dbReference>
<dbReference type="Reactome" id="R-CEL-727802">
    <property type="pathway name" value="Transport of nucleotide sugars"/>
</dbReference>
<dbReference type="PRO" id="PR:Q8MXJ9"/>
<dbReference type="Proteomes" id="UP000001940">
    <property type="component" value="Chromosome V"/>
</dbReference>
<dbReference type="Bgee" id="WBGene00004206">
    <property type="expression patterns" value="Expressed in adult organism and 4 other cell types or tissues"/>
</dbReference>
<dbReference type="ExpressionAtlas" id="Q8MXJ9">
    <property type="expression patterns" value="baseline and differential"/>
</dbReference>
<dbReference type="GO" id="GO:0005789">
    <property type="term" value="C:endoplasmic reticulum membrane"/>
    <property type="evidence" value="ECO:0000318"/>
    <property type="project" value="GO_Central"/>
</dbReference>
<dbReference type="GO" id="GO:0005794">
    <property type="term" value="C:Golgi apparatus"/>
    <property type="evidence" value="ECO:0000314"/>
    <property type="project" value="WormBase"/>
</dbReference>
<dbReference type="GO" id="GO:0032580">
    <property type="term" value="C:Golgi cisterna membrane"/>
    <property type="evidence" value="ECO:0000314"/>
    <property type="project" value="WormBase"/>
</dbReference>
<dbReference type="GO" id="GO:0000139">
    <property type="term" value="C:Golgi membrane"/>
    <property type="evidence" value="ECO:0000318"/>
    <property type="project" value="GO_Central"/>
</dbReference>
<dbReference type="GO" id="GO:0046964">
    <property type="term" value="F:3'-phosphoadenosine 5'-phosphosulfate transmembrane transporter activity"/>
    <property type="evidence" value="ECO:0000314"/>
    <property type="project" value="WormBase"/>
</dbReference>
<dbReference type="GO" id="GO:0046963">
    <property type="term" value="P:3'-phosphoadenosine 5'-phosphosulfate transport"/>
    <property type="evidence" value="ECO:0000314"/>
    <property type="project" value="WormBase"/>
</dbReference>
<dbReference type="GO" id="GO:0055085">
    <property type="term" value="P:transmembrane transport"/>
    <property type="evidence" value="ECO:0000318"/>
    <property type="project" value="GO_Central"/>
</dbReference>
<dbReference type="InterPro" id="IPR013657">
    <property type="entry name" value="SCL35B1-4/HUT1"/>
</dbReference>
<dbReference type="PANTHER" id="PTHR10778:SF13">
    <property type="entry name" value="ADENOSINE 3'-PHOSPHO 5'-PHOSPHOSULFATE TRANSPORTER 1"/>
    <property type="match status" value="1"/>
</dbReference>
<dbReference type="PANTHER" id="PTHR10778">
    <property type="entry name" value="SOLUTE CARRIER FAMILY 35 MEMBER B"/>
    <property type="match status" value="1"/>
</dbReference>
<dbReference type="Pfam" id="PF08449">
    <property type="entry name" value="UAA"/>
    <property type="match status" value="1"/>
</dbReference>
<dbReference type="SUPFAM" id="SSF103481">
    <property type="entry name" value="Multidrug resistance efflux transporter EmrE"/>
    <property type="match status" value="1"/>
</dbReference>
<proteinExistence type="inferred from homology"/>